<evidence type="ECO:0000255" key="1">
    <source>
        <dbReference type="HAMAP-Rule" id="MF_01013"/>
    </source>
</evidence>
<keyword id="KW-0028">Amino-acid biosynthesis</keyword>
<keyword id="KW-0963">Cytoplasm</keyword>
<keyword id="KW-0368">Histidine biosynthesis</keyword>
<keyword id="KW-0456">Lyase</keyword>
<sequence>MLTKRIIPCLDIKEGRVVKGTNFLELRDAGDPVELSKIYNEQGADELVFLDITASFEKRDIIIDVVKRTAEQVFIPLTVGGGIKTVEDFRRILRAGADKISINTSAVKNPELIKEASEIFGTQCVVVAIDVKRNYINDSNDKNLSGKYIFESKNGKFWFEVYIYGGREGTGIDAINWAKKVENLGAGEILLTSMDADGTKDGYDITLTKAISESVKLPVIASGGCGSSAHVVEVFKNGNADAALMASILHYRETDVQKIKKEVQKNNIPVRI</sequence>
<organism>
    <name type="scientific">Methanococcus vannielii (strain ATCC 35089 / DSM 1224 / JCM 13029 / OCM 148 / SB)</name>
    <dbReference type="NCBI Taxonomy" id="406327"/>
    <lineage>
        <taxon>Archaea</taxon>
        <taxon>Methanobacteriati</taxon>
        <taxon>Methanobacteriota</taxon>
        <taxon>Methanomada group</taxon>
        <taxon>Methanococci</taxon>
        <taxon>Methanococcales</taxon>
        <taxon>Methanococcaceae</taxon>
        <taxon>Methanococcus</taxon>
    </lineage>
</organism>
<proteinExistence type="inferred from homology"/>
<protein>
    <recommendedName>
        <fullName evidence="1">Imidazole glycerol phosphate synthase subunit HisF</fullName>
        <ecNumber evidence="1">4.3.2.10</ecNumber>
    </recommendedName>
    <alternativeName>
        <fullName evidence="1">IGP synthase cyclase subunit</fullName>
    </alternativeName>
    <alternativeName>
        <fullName evidence="1">IGP synthase subunit HisF</fullName>
    </alternativeName>
    <alternativeName>
        <fullName evidence="1">ImGP synthase subunit HisF</fullName>
        <shortName evidence="1">IGPS subunit HisF</shortName>
    </alternativeName>
</protein>
<accession>A6UR05</accession>
<reference key="1">
    <citation type="submission" date="2007-06" db="EMBL/GenBank/DDBJ databases">
        <title>Complete sequence of Methanococcus vannielii SB.</title>
        <authorList>
            <consortium name="US DOE Joint Genome Institute"/>
            <person name="Copeland A."/>
            <person name="Lucas S."/>
            <person name="Lapidus A."/>
            <person name="Barry K."/>
            <person name="Glavina del Rio T."/>
            <person name="Dalin E."/>
            <person name="Tice H."/>
            <person name="Pitluck S."/>
            <person name="Chain P."/>
            <person name="Malfatti S."/>
            <person name="Shin M."/>
            <person name="Vergez L."/>
            <person name="Schmutz J."/>
            <person name="Larimer F."/>
            <person name="Land M."/>
            <person name="Hauser L."/>
            <person name="Kyrpides N."/>
            <person name="Anderson I."/>
            <person name="Sieprawska-Lupa M."/>
            <person name="Whitman W.B."/>
            <person name="Richardson P."/>
        </authorList>
    </citation>
    <scope>NUCLEOTIDE SEQUENCE [LARGE SCALE GENOMIC DNA]</scope>
    <source>
        <strain>ATCC 35089 / DSM 1224 / JCM 13029 / OCM 148 / SB</strain>
    </source>
</reference>
<dbReference type="EC" id="4.3.2.10" evidence="1"/>
<dbReference type="EMBL" id="CP000742">
    <property type="protein sequence ID" value="ABR54927.1"/>
    <property type="molecule type" value="Genomic_DNA"/>
</dbReference>
<dbReference type="RefSeq" id="WP_012065856.1">
    <property type="nucleotide sequence ID" value="NC_009634.1"/>
</dbReference>
<dbReference type="SMR" id="A6UR05"/>
<dbReference type="STRING" id="406327.Mevan_1024"/>
<dbReference type="GeneID" id="5325557"/>
<dbReference type="KEGG" id="mvn:Mevan_1024"/>
<dbReference type="eggNOG" id="arCOG00617">
    <property type="taxonomic scope" value="Archaea"/>
</dbReference>
<dbReference type="HOGENOM" id="CLU_048577_4_0_2"/>
<dbReference type="OrthoDB" id="6261at2157"/>
<dbReference type="UniPathway" id="UPA00031">
    <property type="reaction ID" value="UER00010"/>
</dbReference>
<dbReference type="Proteomes" id="UP000001107">
    <property type="component" value="Chromosome"/>
</dbReference>
<dbReference type="GO" id="GO:0005737">
    <property type="term" value="C:cytoplasm"/>
    <property type="evidence" value="ECO:0007669"/>
    <property type="project" value="UniProtKB-SubCell"/>
</dbReference>
<dbReference type="GO" id="GO:0000107">
    <property type="term" value="F:imidazoleglycerol-phosphate synthase activity"/>
    <property type="evidence" value="ECO:0007669"/>
    <property type="project" value="UniProtKB-UniRule"/>
</dbReference>
<dbReference type="GO" id="GO:0016829">
    <property type="term" value="F:lyase activity"/>
    <property type="evidence" value="ECO:0007669"/>
    <property type="project" value="UniProtKB-KW"/>
</dbReference>
<dbReference type="GO" id="GO:0000105">
    <property type="term" value="P:L-histidine biosynthetic process"/>
    <property type="evidence" value="ECO:0007669"/>
    <property type="project" value="UniProtKB-UniRule"/>
</dbReference>
<dbReference type="CDD" id="cd04731">
    <property type="entry name" value="HisF"/>
    <property type="match status" value="1"/>
</dbReference>
<dbReference type="FunFam" id="3.20.20.70:FF:000006">
    <property type="entry name" value="Imidazole glycerol phosphate synthase subunit HisF"/>
    <property type="match status" value="1"/>
</dbReference>
<dbReference type="Gene3D" id="3.20.20.70">
    <property type="entry name" value="Aldolase class I"/>
    <property type="match status" value="1"/>
</dbReference>
<dbReference type="HAMAP" id="MF_01013">
    <property type="entry name" value="HisF"/>
    <property type="match status" value="1"/>
</dbReference>
<dbReference type="InterPro" id="IPR013785">
    <property type="entry name" value="Aldolase_TIM"/>
</dbReference>
<dbReference type="InterPro" id="IPR006062">
    <property type="entry name" value="His_biosynth"/>
</dbReference>
<dbReference type="InterPro" id="IPR004651">
    <property type="entry name" value="HisF"/>
</dbReference>
<dbReference type="InterPro" id="IPR050064">
    <property type="entry name" value="IGPS_HisA/HisF"/>
</dbReference>
<dbReference type="InterPro" id="IPR011060">
    <property type="entry name" value="RibuloseP-bd_barrel"/>
</dbReference>
<dbReference type="NCBIfam" id="TIGR00735">
    <property type="entry name" value="hisF"/>
    <property type="match status" value="1"/>
</dbReference>
<dbReference type="PANTHER" id="PTHR21235:SF2">
    <property type="entry name" value="IMIDAZOLE GLYCEROL PHOSPHATE SYNTHASE HISHF"/>
    <property type="match status" value="1"/>
</dbReference>
<dbReference type="PANTHER" id="PTHR21235">
    <property type="entry name" value="IMIDAZOLE GLYCEROL PHOSPHATE SYNTHASE SUBUNIT HISF/H IGP SYNTHASE SUBUNIT HISF/H"/>
    <property type="match status" value="1"/>
</dbReference>
<dbReference type="Pfam" id="PF00977">
    <property type="entry name" value="His_biosynth"/>
    <property type="match status" value="1"/>
</dbReference>
<dbReference type="SUPFAM" id="SSF51366">
    <property type="entry name" value="Ribulose-phoshate binding barrel"/>
    <property type="match status" value="1"/>
</dbReference>
<comment type="function">
    <text evidence="1">IGPS catalyzes the conversion of PRFAR and glutamine to IGP, AICAR and glutamate. The HisF subunit catalyzes the cyclization activity that produces IGP and AICAR from PRFAR using the ammonia provided by the HisH subunit.</text>
</comment>
<comment type="catalytic activity">
    <reaction evidence="1">
        <text>5-[(5-phospho-1-deoxy-D-ribulos-1-ylimino)methylamino]-1-(5-phospho-beta-D-ribosyl)imidazole-4-carboxamide + L-glutamine = D-erythro-1-(imidazol-4-yl)glycerol 3-phosphate + 5-amino-1-(5-phospho-beta-D-ribosyl)imidazole-4-carboxamide + L-glutamate + H(+)</text>
        <dbReference type="Rhea" id="RHEA:24793"/>
        <dbReference type="ChEBI" id="CHEBI:15378"/>
        <dbReference type="ChEBI" id="CHEBI:29985"/>
        <dbReference type="ChEBI" id="CHEBI:58278"/>
        <dbReference type="ChEBI" id="CHEBI:58359"/>
        <dbReference type="ChEBI" id="CHEBI:58475"/>
        <dbReference type="ChEBI" id="CHEBI:58525"/>
        <dbReference type="EC" id="4.3.2.10"/>
    </reaction>
</comment>
<comment type="pathway">
    <text evidence="1">Amino-acid biosynthesis; L-histidine biosynthesis; L-histidine from 5-phospho-alpha-D-ribose 1-diphosphate: step 5/9.</text>
</comment>
<comment type="subunit">
    <text evidence="1">Heterodimer of HisH and HisF.</text>
</comment>
<comment type="subcellular location">
    <subcellularLocation>
        <location evidence="1">Cytoplasm</location>
    </subcellularLocation>
</comment>
<comment type="similarity">
    <text evidence="1">Belongs to the HisA/HisF family.</text>
</comment>
<feature type="chain" id="PRO_1000063091" description="Imidazole glycerol phosphate synthase subunit HisF">
    <location>
        <begin position="1"/>
        <end position="272"/>
    </location>
</feature>
<feature type="active site" evidence="1">
    <location>
        <position position="11"/>
    </location>
</feature>
<feature type="active site" evidence="1">
    <location>
        <position position="130"/>
    </location>
</feature>
<name>HIS6_METVS</name>
<gene>
    <name evidence="1" type="primary">hisF</name>
    <name type="ordered locus">Mevan_1024</name>
</gene>